<name>DNAK_VEREI</name>
<accession>A1WGJ9</accession>
<feature type="chain" id="PRO_1000059695" description="Chaperone protein DnaK">
    <location>
        <begin position="1"/>
        <end position="653"/>
    </location>
</feature>
<feature type="region of interest" description="Disordered" evidence="2">
    <location>
        <begin position="607"/>
        <end position="653"/>
    </location>
</feature>
<feature type="compositionally biased region" description="Low complexity" evidence="2">
    <location>
        <begin position="607"/>
        <end position="620"/>
    </location>
</feature>
<feature type="compositionally biased region" description="Low complexity" evidence="2">
    <location>
        <begin position="629"/>
        <end position="640"/>
    </location>
</feature>
<feature type="modified residue" description="Phosphothreonine; by autocatalysis" evidence="1">
    <location>
        <position position="200"/>
    </location>
</feature>
<sequence>MGRIIGIDLGTTNSCVSIMEGNTTRVIENSEGARTTPSIVAYQEDGEILVGASAKRQAVTNPKNTLYAVKRLIGRKFTEKEVQKDIDLMPYKIVAAENGDAWIEVRGTKLSAQQVSADILRKMKKTAEDYLGEPVTEAVITVPAYFNDAQRQATKDAGRIAGLDVKRIINEPTAAALAFGLDKQEKGDRKIAVYDLGGGTFDVSIIEIADVDGEKQFEVLSTNGDTFLGGEDFDQRIIDYIISEFKKEQGVDLSKDVLALQRLKEAAEKAKIELSNSAATDINLPYITADASGPRHLSIKLTRAKLESLVDELIERTIAPCRMAIKDAGVSVSDIHDVILVGGMTRMPKVQEMVKEFFGKDPRKDVNPDEAVAVGAAIQGQVLTGERKDVLLLDVTPLSLGIETLGGVMTKMITKNTTIPTKFAQTFSTADDNQPAVTIKVFQGEREMASGNKLLGEFNLEGIPPAARGVPQIEVSFDIDANGILHVGAKDKGTGKENKITIKANSGLSEEEIQQMIKDAELNAADDKRKLELVQVRNQAEAAVHSVTKNLAEHGDKLDAGEKDAIAAAVKALEEALKGEDKAAIADKTTALMAASQKLGEKMYAESQAAQAAQGAAAGAGNAGGAGGASDASGKPAGDDNVVDAEVKEVKKG</sequence>
<protein>
    <recommendedName>
        <fullName evidence="1">Chaperone protein DnaK</fullName>
    </recommendedName>
    <alternativeName>
        <fullName evidence="1">HSP70</fullName>
    </alternativeName>
    <alternativeName>
        <fullName evidence="1">Heat shock 70 kDa protein</fullName>
    </alternativeName>
    <alternativeName>
        <fullName evidence="1">Heat shock protein 70</fullName>
    </alternativeName>
</protein>
<reference key="1">
    <citation type="submission" date="2006-12" db="EMBL/GenBank/DDBJ databases">
        <title>Complete sequence of chromosome 1 of Verminephrobacter eiseniae EF01-2.</title>
        <authorList>
            <person name="Copeland A."/>
            <person name="Lucas S."/>
            <person name="Lapidus A."/>
            <person name="Barry K."/>
            <person name="Detter J.C."/>
            <person name="Glavina del Rio T."/>
            <person name="Dalin E."/>
            <person name="Tice H."/>
            <person name="Pitluck S."/>
            <person name="Chertkov O."/>
            <person name="Brettin T."/>
            <person name="Bruce D."/>
            <person name="Han C."/>
            <person name="Tapia R."/>
            <person name="Gilna P."/>
            <person name="Schmutz J."/>
            <person name="Larimer F."/>
            <person name="Land M."/>
            <person name="Hauser L."/>
            <person name="Kyrpides N."/>
            <person name="Kim E."/>
            <person name="Stahl D."/>
            <person name="Richardson P."/>
        </authorList>
    </citation>
    <scope>NUCLEOTIDE SEQUENCE [LARGE SCALE GENOMIC DNA]</scope>
    <source>
        <strain>EF01-2</strain>
    </source>
</reference>
<keyword id="KW-0067">ATP-binding</keyword>
<keyword id="KW-0143">Chaperone</keyword>
<keyword id="KW-0547">Nucleotide-binding</keyword>
<keyword id="KW-0597">Phosphoprotein</keyword>
<keyword id="KW-1185">Reference proteome</keyword>
<keyword id="KW-0346">Stress response</keyword>
<proteinExistence type="inferred from homology"/>
<organism>
    <name type="scientific">Verminephrobacter eiseniae (strain EF01-2)</name>
    <dbReference type="NCBI Taxonomy" id="391735"/>
    <lineage>
        <taxon>Bacteria</taxon>
        <taxon>Pseudomonadati</taxon>
        <taxon>Pseudomonadota</taxon>
        <taxon>Betaproteobacteria</taxon>
        <taxon>Burkholderiales</taxon>
        <taxon>Comamonadaceae</taxon>
        <taxon>Verminephrobacter</taxon>
    </lineage>
</organism>
<evidence type="ECO:0000255" key="1">
    <source>
        <dbReference type="HAMAP-Rule" id="MF_00332"/>
    </source>
</evidence>
<evidence type="ECO:0000256" key="2">
    <source>
        <dbReference type="SAM" id="MobiDB-lite"/>
    </source>
</evidence>
<dbReference type="EMBL" id="CP000542">
    <property type="protein sequence ID" value="ABM56756.1"/>
    <property type="molecule type" value="Genomic_DNA"/>
</dbReference>
<dbReference type="RefSeq" id="WP_011808769.1">
    <property type="nucleotide sequence ID" value="NC_008786.1"/>
</dbReference>
<dbReference type="SMR" id="A1WGJ9"/>
<dbReference type="STRING" id="391735.Veis_0979"/>
<dbReference type="GeneID" id="76459656"/>
<dbReference type="KEGG" id="vei:Veis_0979"/>
<dbReference type="eggNOG" id="COG0443">
    <property type="taxonomic scope" value="Bacteria"/>
</dbReference>
<dbReference type="HOGENOM" id="CLU_005965_2_1_4"/>
<dbReference type="OrthoDB" id="9766019at2"/>
<dbReference type="Proteomes" id="UP000000374">
    <property type="component" value="Chromosome"/>
</dbReference>
<dbReference type="GO" id="GO:0005524">
    <property type="term" value="F:ATP binding"/>
    <property type="evidence" value="ECO:0007669"/>
    <property type="project" value="UniProtKB-UniRule"/>
</dbReference>
<dbReference type="GO" id="GO:0140662">
    <property type="term" value="F:ATP-dependent protein folding chaperone"/>
    <property type="evidence" value="ECO:0007669"/>
    <property type="project" value="InterPro"/>
</dbReference>
<dbReference type="GO" id="GO:0051082">
    <property type="term" value="F:unfolded protein binding"/>
    <property type="evidence" value="ECO:0007669"/>
    <property type="project" value="InterPro"/>
</dbReference>
<dbReference type="CDD" id="cd10234">
    <property type="entry name" value="ASKHA_NBD_HSP70_DnaK-like"/>
    <property type="match status" value="1"/>
</dbReference>
<dbReference type="FunFam" id="2.60.34.10:FF:000014">
    <property type="entry name" value="Chaperone protein DnaK HSP70"/>
    <property type="match status" value="1"/>
</dbReference>
<dbReference type="FunFam" id="3.30.30.30:FF:000003">
    <property type="entry name" value="Heat shock protein 9"/>
    <property type="match status" value="1"/>
</dbReference>
<dbReference type="FunFam" id="1.20.1270.10:FF:000001">
    <property type="entry name" value="Molecular chaperone DnaK"/>
    <property type="match status" value="1"/>
</dbReference>
<dbReference type="FunFam" id="3.30.420.40:FF:000004">
    <property type="entry name" value="Molecular chaperone DnaK"/>
    <property type="match status" value="1"/>
</dbReference>
<dbReference type="FunFam" id="3.90.640.10:FF:000003">
    <property type="entry name" value="Molecular chaperone DnaK"/>
    <property type="match status" value="1"/>
</dbReference>
<dbReference type="Gene3D" id="1.20.1270.10">
    <property type="match status" value="1"/>
</dbReference>
<dbReference type="Gene3D" id="3.30.420.40">
    <property type="match status" value="2"/>
</dbReference>
<dbReference type="Gene3D" id="3.90.640.10">
    <property type="entry name" value="Actin, Chain A, domain 4"/>
    <property type="match status" value="1"/>
</dbReference>
<dbReference type="Gene3D" id="2.60.34.10">
    <property type="entry name" value="Substrate Binding Domain Of DNAk, Chain A, domain 1"/>
    <property type="match status" value="1"/>
</dbReference>
<dbReference type="HAMAP" id="MF_00332">
    <property type="entry name" value="DnaK"/>
    <property type="match status" value="1"/>
</dbReference>
<dbReference type="InterPro" id="IPR043129">
    <property type="entry name" value="ATPase_NBD"/>
</dbReference>
<dbReference type="InterPro" id="IPR012725">
    <property type="entry name" value="Chaperone_DnaK"/>
</dbReference>
<dbReference type="InterPro" id="IPR018181">
    <property type="entry name" value="Heat_shock_70_CS"/>
</dbReference>
<dbReference type="InterPro" id="IPR029048">
    <property type="entry name" value="HSP70_C_sf"/>
</dbReference>
<dbReference type="InterPro" id="IPR029047">
    <property type="entry name" value="HSP70_peptide-bd_sf"/>
</dbReference>
<dbReference type="InterPro" id="IPR013126">
    <property type="entry name" value="Hsp_70_fam"/>
</dbReference>
<dbReference type="NCBIfam" id="NF001413">
    <property type="entry name" value="PRK00290.1"/>
    <property type="match status" value="1"/>
</dbReference>
<dbReference type="NCBIfam" id="NF003520">
    <property type="entry name" value="PRK05183.1"/>
    <property type="match status" value="1"/>
</dbReference>
<dbReference type="NCBIfam" id="TIGR02350">
    <property type="entry name" value="prok_dnaK"/>
    <property type="match status" value="1"/>
</dbReference>
<dbReference type="PANTHER" id="PTHR19375">
    <property type="entry name" value="HEAT SHOCK PROTEIN 70KDA"/>
    <property type="match status" value="1"/>
</dbReference>
<dbReference type="Pfam" id="PF00012">
    <property type="entry name" value="HSP70"/>
    <property type="match status" value="1"/>
</dbReference>
<dbReference type="PRINTS" id="PR00301">
    <property type="entry name" value="HEATSHOCK70"/>
</dbReference>
<dbReference type="SUPFAM" id="SSF53067">
    <property type="entry name" value="Actin-like ATPase domain"/>
    <property type="match status" value="2"/>
</dbReference>
<dbReference type="SUPFAM" id="SSF100934">
    <property type="entry name" value="Heat shock protein 70kD (HSP70), C-terminal subdomain"/>
    <property type="match status" value="1"/>
</dbReference>
<dbReference type="SUPFAM" id="SSF100920">
    <property type="entry name" value="Heat shock protein 70kD (HSP70), peptide-binding domain"/>
    <property type="match status" value="1"/>
</dbReference>
<dbReference type="PROSITE" id="PS00297">
    <property type="entry name" value="HSP70_1"/>
    <property type="match status" value="1"/>
</dbReference>
<dbReference type="PROSITE" id="PS00329">
    <property type="entry name" value="HSP70_2"/>
    <property type="match status" value="1"/>
</dbReference>
<dbReference type="PROSITE" id="PS01036">
    <property type="entry name" value="HSP70_3"/>
    <property type="match status" value="1"/>
</dbReference>
<gene>
    <name evidence="1" type="primary">dnaK</name>
    <name type="ordered locus">Veis_0979</name>
</gene>
<comment type="function">
    <text evidence="1">Acts as a chaperone.</text>
</comment>
<comment type="induction">
    <text evidence="1">By stress conditions e.g. heat shock.</text>
</comment>
<comment type="similarity">
    <text evidence="1">Belongs to the heat shock protein 70 family.</text>
</comment>